<comment type="catalytic activity">
    <reaction evidence="1">
        <text>N-(5-phospho-beta-D-ribosyl)anthranilate = 1-(2-carboxyphenylamino)-1-deoxy-D-ribulose 5-phosphate</text>
        <dbReference type="Rhea" id="RHEA:21540"/>
        <dbReference type="ChEBI" id="CHEBI:18277"/>
        <dbReference type="ChEBI" id="CHEBI:58613"/>
        <dbReference type="EC" id="5.3.1.24"/>
    </reaction>
</comment>
<comment type="pathway">
    <text evidence="1">Amino-acid biosynthesis; L-tryptophan biosynthesis; L-tryptophan from chorismate: step 3/5.</text>
</comment>
<comment type="similarity">
    <text evidence="1">Belongs to the TrpF family.</text>
</comment>
<keyword id="KW-0028">Amino-acid biosynthesis</keyword>
<keyword id="KW-0057">Aromatic amino acid biosynthesis</keyword>
<keyword id="KW-0413">Isomerase</keyword>
<keyword id="KW-1185">Reference proteome</keyword>
<keyword id="KW-0822">Tryptophan biosynthesis</keyword>
<dbReference type="EC" id="5.3.1.24" evidence="1"/>
<dbReference type="EMBL" id="CP000725">
    <property type="protein sequence ID" value="ABV09399.1"/>
    <property type="molecule type" value="Genomic_DNA"/>
</dbReference>
<dbReference type="RefSeq" id="WP_012000138.1">
    <property type="nucleotide sequence ID" value="NC_009785.1"/>
</dbReference>
<dbReference type="SMR" id="A8AW04"/>
<dbReference type="STRING" id="467705.SGO_0661"/>
<dbReference type="KEGG" id="sgo:SGO_0661"/>
<dbReference type="eggNOG" id="COG0135">
    <property type="taxonomic scope" value="Bacteria"/>
</dbReference>
<dbReference type="HOGENOM" id="CLU_076364_1_0_9"/>
<dbReference type="UniPathway" id="UPA00035">
    <property type="reaction ID" value="UER00042"/>
</dbReference>
<dbReference type="Proteomes" id="UP000001131">
    <property type="component" value="Chromosome"/>
</dbReference>
<dbReference type="GO" id="GO:0004640">
    <property type="term" value="F:phosphoribosylanthranilate isomerase activity"/>
    <property type="evidence" value="ECO:0007669"/>
    <property type="project" value="UniProtKB-UniRule"/>
</dbReference>
<dbReference type="GO" id="GO:0000162">
    <property type="term" value="P:L-tryptophan biosynthetic process"/>
    <property type="evidence" value="ECO:0007669"/>
    <property type="project" value="UniProtKB-UniRule"/>
</dbReference>
<dbReference type="CDD" id="cd00405">
    <property type="entry name" value="PRAI"/>
    <property type="match status" value="1"/>
</dbReference>
<dbReference type="FunFam" id="3.20.20.70:FF:000075">
    <property type="entry name" value="Tryptophan biosynthesis protein TRP1"/>
    <property type="match status" value="1"/>
</dbReference>
<dbReference type="Gene3D" id="3.20.20.70">
    <property type="entry name" value="Aldolase class I"/>
    <property type="match status" value="1"/>
</dbReference>
<dbReference type="HAMAP" id="MF_00135">
    <property type="entry name" value="PRAI"/>
    <property type="match status" value="1"/>
</dbReference>
<dbReference type="InterPro" id="IPR013785">
    <property type="entry name" value="Aldolase_TIM"/>
</dbReference>
<dbReference type="InterPro" id="IPR001240">
    <property type="entry name" value="PRAI_dom"/>
</dbReference>
<dbReference type="InterPro" id="IPR011060">
    <property type="entry name" value="RibuloseP-bd_barrel"/>
</dbReference>
<dbReference type="InterPro" id="IPR044643">
    <property type="entry name" value="TrpF_fam"/>
</dbReference>
<dbReference type="NCBIfam" id="NF002300">
    <property type="entry name" value="PRK01222.1-7"/>
    <property type="match status" value="1"/>
</dbReference>
<dbReference type="PANTHER" id="PTHR42894">
    <property type="entry name" value="N-(5'-PHOSPHORIBOSYL)ANTHRANILATE ISOMERASE"/>
    <property type="match status" value="1"/>
</dbReference>
<dbReference type="PANTHER" id="PTHR42894:SF1">
    <property type="entry name" value="N-(5'-PHOSPHORIBOSYL)ANTHRANILATE ISOMERASE"/>
    <property type="match status" value="1"/>
</dbReference>
<dbReference type="Pfam" id="PF00697">
    <property type="entry name" value="PRAI"/>
    <property type="match status" value="1"/>
</dbReference>
<dbReference type="SUPFAM" id="SSF51366">
    <property type="entry name" value="Ribulose-phoshate binding barrel"/>
    <property type="match status" value="1"/>
</dbReference>
<gene>
    <name evidence="1" type="primary">trpF</name>
    <name type="ordered locus">SGO_0661</name>
</gene>
<name>TRPF_STRGC</name>
<evidence type="ECO:0000255" key="1">
    <source>
        <dbReference type="HAMAP-Rule" id="MF_00135"/>
    </source>
</evidence>
<accession>A8AW04</accession>
<organism>
    <name type="scientific">Streptococcus gordonii (strain Challis / ATCC 35105 / BCRC 15272 / CH1 / DL1 / V288)</name>
    <dbReference type="NCBI Taxonomy" id="467705"/>
    <lineage>
        <taxon>Bacteria</taxon>
        <taxon>Bacillati</taxon>
        <taxon>Bacillota</taxon>
        <taxon>Bacilli</taxon>
        <taxon>Lactobacillales</taxon>
        <taxon>Streptococcaceae</taxon>
        <taxon>Streptococcus</taxon>
    </lineage>
</organism>
<feature type="chain" id="PRO_1000076441" description="N-(5'-phosphoribosyl)anthranilate isomerase">
    <location>
        <begin position="1"/>
        <end position="195"/>
    </location>
</feature>
<proteinExistence type="inferred from homology"/>
<protein>
    <recommendedName>
        <fullName evidence="1">N-(5'-phosphoribosyl)anthranilate isomerase</fullName>
        <shortName evidence="1">PRAI</shortName>
        <ecNumber evidence="1">5.3.1.24</ecNumber>
    </recommendedName>
</protein>
<reference key="1">
    <citation type="journal article" date="2007" name="J. Bacteriol.">
        <title>Genome-wide transcriptional changes in Streptococcus gordonii in response to competence signaling peptide.</title>
        <authorList>
            <person name="Vickerman M.M."/>
            <person name="Iobst S."/>
            <person name="Jesionowski A.M."/>
            <person name="Gill S.R."/>
        </authorList>
    </citation>
    <scope>NUCLEOTIDE SEQUENCE [LARGE SCALE GENOMIC DNA]</scope>
    <source>
        <strain>Challis / ATCC 35105 / BCRC 15272 / CH1 / DL1 / V288</strain>
    </source>
</reference>
<sequence length="195" mass="21231">MTKVKICGLSTASAVETACQAGADYIGFVFAESRRRVSLEQAQKLAALVPSTVRKVGVFVSPSLAELQEAISVANLDLVQIHGDFDEELLTQIDRPVIQAYQVKGALKDVSQQADYLLFDAPLAGSGRTFDWQAFDKSQIHQPFFIAGGLNAGNVREAIQHFAPYAVDVSSGVETDAQKDLEKIKEFIERVKDGI</sequence>